<comment type="function">
    <text evidence="1">With CysN forms the ATP sulfurylase (ATPS) that catalyzes the adenylation of sulfate producing adenosine 5'-phosphosulfate (APS) and diphosphate, the first enzymatic step in sulfur assimilation pathway. APS synthesis involves the formation of a high-energy phosphoric-sulfuric acid anhydride bond driven by GTP hydrolysis by CysN coupled to ATP hydrolysis by CysD.</text>
</comment>
<comment type="catalytic activity">
    <reaction evidence="1">
        <text>sulfate + ATP + H(+) = adenosine 5'-phosphosulfate + diphosphate</text>
        <dbReference type="Rhea" id="RHEA:18133"/>
        <dbReference type="ChEBI" id="CHEBI:15378"/>
        <dbReference type="ChEBI" id="CHEBI:16189"/>
        <dbReference type="ChEBI" id="CHEBI:30616"/>
        <dbReference type="ChEBI" id="CHEBI:33019"/>
        <dbReference type="ChEBI" id="CHEBI:58243"/>
        <dbReference type="EC" id="2.7.7.4"/>
    </reaction>
</comment>
<comment type="pathway">
    <text evidence="1">Sulfur metabolism; hydrogen sulfide biosynthesis; sulfite from sulfate: step 1/3.</text>
</comment>
<comment type="subunit">
    <text evidence="1">Heterodimer composed of CysD, the smaller subunit, and CysN.</text>
</comment>
<comment type="similarity">
    <text evidence="1">Belongs to the PAPS reductase family. CysD subfamily.</text>
</comment>
<keyword id="KW-0067">ATP-binding</keyword>
<keyword id="KW-0547">Nucleotide-binding</keyword>
<keyword id="KW-0548">Nucleotidyltransferase</keyword>
<keyword id="KW-0808">Transferase</keyword>
<dbReference type="EC" id="2.7.7.4" evidence="1"/>
<dbReference type="EMBL" id="CP000749">
    <property type="protein sequence ID" value="ABR71104.1"/>
    <property type="molecule type" value="Genomic_DNA"/>
</dbReference>
<dbReference type="SMR" id="A6VXC5"/>
<dbReference type="STRING" id="400668.Mmwyl1_2182"/>
<dbReference type="KEGG" id="mmw:Mmwyl1_2182"/>
<dbReference type="eggNOG" id="COG0175">
    <property type="taxonomic scope" value="Bacteria"/>
</dbReference>
<dbReference type="HOGENOM" id="CLU_043026_0_0_6"/>
<dbReference type="OrthoDB" id="9772604at2"/>
<dbReference type="UniPathway" id="UPA00140">
    <property type="reaction ID" value="UER00204"/>
</dbReference>
<dbReference type="GO" id="GO:0005524">
    <property type="term" value="F:ATP binding"/>
    <property type="evidence" value="ECO:0007669"/>
    <property type="project" value="UniProtKB-KW"/>
</dbReference>
<dbReference type="GO" id="GO:0004781">
    <property type="term" value="F:sulfate adenylyltransferase (ATP) activity"/>
    <property type="evidence" value="ECO:0007669"/>
    <property type="project" value="UniProtKB-UniRule"/>
</dbReference>
<dbReference type="GO" id="GO:0070814">
    <property type="term" value="P:hydrogen sulfide biosynthetic process"/>
    <property type="evidence" value="ECO:0007669"/>
    <property type="project" value="UniProtKB-UniRule"/>
</dbReference>
<dbReference type="GO" id="GO:0000103">
    <property type="term" value="P:sulfate assimilation"/>
    <property type="evidence" value="ECO:0007669"/>
    <property type="project" value="UniProtKB-UniRule"/>
</dbReference>
<dbReference type="CDD" id="cd23946">
    <property type="entry name" value="Sulfate_adenylyltransferase_2"/>
    <property type="match status" value="1"/>
</dbReference>
<dbReference type="FunFam" id="3.40.50.620:FF:000002">
    <property type="entry name" value="Sulfate adenylyltransferase subunit 2"/>
    <property type="match status" value="1"/>
</dbReference>
<dbReference type="Gene3D" id="3.40.50.620">
    <property type="entry name" value="HUPs"/>
    <property type="match status" value="1"/>
</dbReference>
<dbReference type="HAMAP" id="MF_00064">
    <property type="entry name" value="Sulf_adenylyltr_sub2"/>
    <property type="match status" value="1"/>
</dbReference>
<dbReference type="InterPro" id="IPR002500">
    <property type="entry name" value="PAPS_reduct_dom"/>
</dbReference>
<dbReference type="InterPro" id="IPR014729">
    <property type="entry name" value="Rossmann-like_a/b/a_fold"/>
</dbReference>
<dbReference type="InterPro" id="IPR011784">
    <property type="entry name" value="SO4_adenylTrfase_ssu"/>
</dbReference>
<dbReference type="InterPro" id="IPR050128">
    <property type="entry name" value="Sulfate_adenylyltrnsfr_sub2"/>
</dbReference>
<dbReference type="NCBIfam" id="TIGR02039">
    <property type="entry name" value="CysD"/>
    <property type="match status" value="1"/>
</dbReference>
<dbReference type="NCBIfam" id="NF003587">
    <property type="entry name" value="PRK05253.1"/>
    <property type="match status" value="1"/>
</dbReference>
<dbReference type="NCBIfam" id="NF009214">
    <property type="entry name" value="PRK12563.1"/>
    <property type="match status" value="1"/>
</dbReference>
<dbReference type="PANTHER" id="PTHR43196">
    <property type="entry name" value="SULFATE ADENYLYLTRANSFERASE SUBUNIT 2"/>
    <property type="match status" value="1"/>
</dbReference>
<dbReference type="PANTHER" id="PTHR43196:SF1">
    <property type="entry name" value="SULFATE ADENYLYLTRANSFERASE SUBUNIT 2"/>
    <property type="match status" value="1"/>
</dbReference>
<dbReference type="Pfam" id="PF01507">
    <property type="entry name" value="PAPS_reduct"/>
    <property type="match status" value="1"/>
</dbReference>
<dbReference type="PIRSF" id="PIRSF002936">
    <property type="entry name" value="CysDAde_trans"/>
    <property type="match status" value="1"/>
</dbReference>
<dbReference type="SUPFAM" id="SSF52402">
    <property type="entry name" value="Adenine nucleotide alpha hydrolases-like"/>
    <property type="match status" value="1"/>
</dbReference>
<proteinExistence type="inferred from homology"/>
<protein>
    <recommendedName>
        <fullName evidence="1">Sulfate adenylyltransferase subunit 2</fullName>
        <ecNumber evidence="1">2.7.7.4</ecNumber>
    </recommendedName>
    <alternativeName>
        <fullName evidence="1">ATP-sulfurylase small subunit</fullName>
    </alternativeName>
    <alternativeName>
        <fullName evidence="1">Sulfate adenylate transferase</fullName>
        <shortName evidence="1">SAT</shortName>
    </alternativeName>
</protein>
<gene>
    <name evidence="1" type="primary">cysD</name>
    <name type="ordered locus">Mmwyl1_2182</name>
</gene>
<evidence type="ECO:0000255" key="1">
    <source>
        <dbReference type="HAMAP-Rule" id="MF_00064"/>
    </source>
</evidence>
<evidence type="ECO:0000256" key="2">
    <source>
        <dbReference type="SAM" id="MobiDB-lite"/>
    </source>
</evidence>
<sequence>MTEARLTHLKQLEAESIHIIREVAAEFDNPVMLYSIGKDSAVMLHLAMKAFYPGKPPFPLMHVDTGWKFKEMITFRDEMVSKLGLELIVHQNQEGVEQGIGPFTHGSSKHTDVMKTQGLKQALDKYGFDAAFGGARRDEEKSRAKERVYSFRDKQHRWDPKNQRPELWNIYNGKVNKGESIRVFPLSNWTELDIWQYIYLESIPIVPLYFSEKRPVVERDGTLIMVDDERMPLNGEVPEMKSVRFRTLGCYPLTGAVESEAATLPEIIQEMLLTKSSERQGRMIDHDSSGSMEEKKKQGYF</sequence>
<feature type="chain" id="PRO_0000340202" description="Sulfate adenylyltransferase subunit 2">
    <location>
        <begin position="1"/>
        <end position="301"/>
    </location>
</feature>
<feature type="region of interest" description="Disordered" evidence="2">
    <location>
        <begin position="279"/>
        <end position="301"/>
    </location>
</feature>
<accession>A6VXC5</accession>
<organism>
    <name type="scientific">Marinomonas sp. (strain MWYL1)</name>
    <dbReference type="NCBI Taxonomy" id="400668"/>
    <lineage>
        <taxon>Bacteria</taxon>
        <taxon>Pseudomonadati</taxon>
        <taxon>Pseudomonadota</taxon>
        <taxon>Gammaproteobacteria</taxon>
        <taxon>Oceanospirillales</taxon>
        <taxon>Oceanospirillaceae</taxon>
        <taxon>Marinomonas</taxon>
    </lineage>
</organism>
<reference key="1">
    <citation type="submission" date="2007-06" db="EMBL/GenBank/DDBJ databases">
        <title>Complete sequence of Marinomonas sp. MWYL1.</title>
        <authorList>
            <consortium name="US DOE Joint Genome Institute"/>
            <person name="Copeland A."/>
            <person name="Lucas S."/>
            <person name="Lapidus A."/>
            <person name="Barry K."/>
            <person name="Glavina del Rio T."/>
            <person name="Dalin E."/>
            <person name="Tice H."/>
            <person name="Pitluck S."/>
            <person name="Kiss H."/>
            <person name="Brettin T."/>
            <person name="Bruce D."/>
            <person name="Detter J.C."/>
            <person name="Han C."/>
            <person name="Schmutz J."/>
            <person name="Larimer F."/>
            <person name="Land M."/>
            <person name="Hauser L."/>
            <person name="Kyrpides N."/>
            <person name="Kim E."/>
            <person name="Johnston A.W.B."/>
            <person name="Todd J.D."/>
            <person name="Rogers R."/>
            <person name="Wexler M."/>
            <person name="Bond P.L."/>
            <person name="Li Y."/>
            <person name="Richardson P."/>
        </authorList>
    </citation>
    <scope>NUCLEOTIDE SEQUENCE [LARGE SCALE GENOMIC DNA]</scope>
    <source>
        <strain>MWYL1</strain>
    </source>
</reference>
<name>CYSD_MARMS</name>